<gene>
    <name type="primary">Znf575</name>
    <name type="synonym">Zfp575</name>
</gene>
<keyword id="KW-0238">DNA-binding</keyword>
<keyword id="KW-0479">Metal-binding</keyword>
<keyword id="KW-0539">Nucleus</keyword>
<keyword id="KW-1185">Reference proteome</keyword>
<keyword id="KW-0677">Repeat</keyword>
<keyword id="KW-0804">Transcription</keyword>
<keyword id="KW-0805">Transcription regulation</keyword>
<keyword id="KW-0862">Zinc</keyword>
<keyword id="KW-0863">Zinc-finger</keyword>
<evidence type="ECO:0000255" key="1">
    <source>
        <dbReference type="PROSITE-ProRule" id="PRU00042"/>
    </source>
</evidence>
<evidence type="ECO:0000256" key="2">
    <source>
        <dbReference type="SAM" id="MobiDB-lite"/>
    </source>
</evidence>
<evidence type="ECO:0000305" key="3"/>
<reference key="1">
    <citation type="journal article" date="2005" name="Science">
        <title>The transcriptional landscape of the mammalian genome.</title>
        <authorList>
            <person name="Carninci P."/>
            <person name="Kasukawa T."/>
            <person name="Katayama S."/>
            <person name="Gough J."/>
            <person name="Frith M.C."/>
            <person name="Maeda N."/>
            <person name="Oyama R."/>
            <person name="Ravasi T."/>
            <person name="Lenhard B."/>
            <person name="Wells C."/>
            <person name="Kodzius R."/>
            <person name="Shimokawa K."/>
            <person name="Bajic V.B."/>
            <person name="Brenner S.E."/>
            <person name="Batalov S."/>
            <person name="Forrest A.R."/>
            <person name="Zavolan M."/>
            <person name="Davis M.J."/>
            <person name="Wilming L.G."/>
            <person name="Aidinis V."/>
            <person name="Allen J.E."/>
            <person name="Ambesi-Impiombato A."/>
            <person name="Apweiler R."/>
            <person name="Aturaliya R.N."/>
            <person name="Bailey T.L."/>
            <person name="Bansal M."/>
            <person name="Baxter L."/>
            <person name="Beisel K.W."/>
            <person name="Bersano T."/>
            <person name="Bono H."/>
            <person name="Chalk A.M."/>
            <person name="Chiu K.P."/>
            <person name="Choudhary V."/>
            <person name="Christoffels A."/>
            <person name="Clutterbuck D.R."/>
            <person name="Crowe M.L."/>
            <person name="Dalla E."/>
            <person name="Dalrymple B.P."/>
            <person name="de Bono B."/>
            <person name="Della Gatta G."/>
            <person name="di Bernardo D."/>
            <person name="Down T."/>
            <person name="Engstrom P."/>
            <person name="Fagiolini M."/>
            <person name="Faulkner G."/>
            <person name="Fletcher C.F."/>
            <person name="Fukushima T."/>
            <person name="Furuno M."/>
            <person name="Futaki S."/>
            <person name="Gariboldi M."/>
            <person name="Georgii-Hemming P."/>
            <person name="Gingeras T.R."/>
            <person name="Gojobori T."/>
            <person name="Green R.E."/>
            <person name="Gustincich S."/>
            <person name="Harbers M."/>
            <person name="Hayashi Y."/>
            <person name="Hensch T.K."/>
            <person name="Hirokawa N."/>
            <person name="Hill D."/>
            <person name="Huminiecki L."/>
            <person name="Iacono M."/>
            <person name="Ikeo K."/>
            <person name="Iwama A."/>
            <person name="Ishikawa T."/>
            <person name="Jakt M."/>
            <person name="Kanapin A."/>
            <person name="Katoh M."/>
            <person name="Kawasawa Y."/>
            <person name="Kelso J."/>
            <person name="Kitamura H."/>
            <person name="Kitano H."/>
            <person name="Kollias G."/>
            <person name="Krishnan S.P."/>
            <person name="Kruger A."/>
            <person name="Kummerfeld S.K."/>
            <person name="Kurochkin I.V."/>
            <person name="Lareau L.F."/>
            <person name="Lazarevic D."/>
            <person name="Lipovich L."/>
            <person name="Liu J."/>
            <person name="Liuni S."/>
            <person name="McWilliam S."/>
            <person name="Madan Babu M."/>
            <person name="Madera M."/>
            <person name="Marchionni L."/>
            <person name="Matsuda H."/>
            <person name="Matsuzawa S."/>
            <person name="Miki H."/>
            <person name="Mignone F."/>
            <person name="Miyake S."/>
            <person name="Morris K."/>
            <person name="Mottagui-Tabar S."/>
            <person name="Mulder N."/>
            <person name="Nakano N."/>
            <person name="Nakauchi H."/>
            <person name="Ng P."/>
            <person name="Nilsson R."/>
            <person name="Nishiguchi S."/>
            <person name="Nishikawa S."/>
            <person name="Nori F."/>
            <person name="Ohara O."/>
            <person name="Okazaki Y."/>
            <person name="Orlando V."/>
            <person name="Pang K.C."/>
            <person name="Pavan W.J."/>
            <person name="Pavesi G."/>
            <person name="Pesole G."/>
            <person name="Petrovsky N."/>
            <person name="Piazza S."/>
            <person name="Reed J."/>
            <person name="Reid J.F."/>
            <person name="Ring B.Z."/>
            <person name="Ringwald M."/>
            <person name="Rost B."/>
            <person name="Ruan Y."/>
            <person name="Salzberg S.L."/>
            <person name="Sandelin A."/>
            <person name="Schneider C."/>
            <person name="Schoenbach C."/>
            <person name="Sekiguchi K."/>
            <person name="Semple C.A."/>
            <person name="Seno S."/>
            <person name="Sessa L."/>
            <person name="Sheng Y."/>
            <person name="Shibata Y."/>
            <person name="Shimada H."/>
            <person name="Shimada K."/>
            <person name="Silva D."/>
            <person name="Sinclair B."/>
            <person name="Sperling S."/>
            <person name="Stupka E."/>
            <person name="Sugiura K."/>
            <person name="Sultana R."/>
            <person name="Takenaka Y."/>
            <person name="Taki K."/>
            <person name="Tammoja K."/>
            <person name="Tan S.L."/>
            <person name="Tang S."/>
            <person name="Taylor M.S."/>
            <person name="Tegner J."/>
            <person name="Teichmann S.A."/>
            <person name="Ueda H.R."/>
            <person name="van Nimwegen E."/>
            <person name="Verardo R."/>
            <person name="Wei C.L."/>
            <person name="Yagi K."/>
            <person name="Yamanishi H."/>
            <person name="Zabarovsky E."/>
            <person name="Zhu S."/>
            <person name="Zimmer A."/>
            <person name="Hide W."/>
            <person name="Bult C."/>
            <person name="Grimmond S.M."/>
            <person name="Teasdale R.D."/>
            <person name="Liu E.T."/>
            <person name="Brusic V."/>
            <person name="Quackenbush J."/>
            <person name="Wahlestedt C."/>
            <person name="Mattick J.S."/>
            <person name="Hume D.A."/>
            <person name="Kai C."/>
            <person name="Sasaki D."/>
            <person name="Tomaru Y."/>
            <person name="Fukuda S."/>
            <person name="Kanamori-Katayama M."/>
            <person name="Suzuki M."/>
            <person name="Aoki J."/>
            <person name="Arakawa T."/>
            <person name="Iida J."/>
            <person name="Imamura K."/>
            <person name="Itoh M."/>
            <person name="Kato T."/>
            <person name="Kawaji H."/>
            <person name="Kawagashira N."/>
            <person name="Kawashima T."/>
            <person name="Kojima M."/>
            <person name="Kondo S."/>
            <person name="Konno H."/>
            <person name="Nakano K."/>
            <person name="Ninomiya N."/>
            <person name="Nishio T."/>
            <person name="Okada M."/>
            <person name="Plessy C."/>
            <person name="Shibata K."/>
            <person name="Shiraki T."/>
            <person name="Suzuki S."/>
            <person name="Tagami M."/>
            <person name="Waki K."/>
            <person name="Watahiki A."/>
            <person name="Okamura-Oho Y."/>
            <person name="Suzuki H."/>
            <person name="Kawai J."/>
            <person name="Hayashizaki Y."/>
        </authorList>
    </citation>
    <scope>NUCLEOTIDE SEQUENCE [LARGE SCALE MRNA]</scope>
    <source>
        <strain>C57BL/6J</strain>
        <tissue>Visual cortex</tissue>
    </source>
</reference>
<accession>Q3TXZ1</accession>
<name>ZN575_MOUSE</name>
<feature type="chain" id="PRO_0000047666" description="Zinc finger protein 575">
    <location>
        <begin position="1"/>
        <end position="239"/>
    </location>
</feature>
<feature type="zinc finger region" description="C2H2-type 1" evidence="1">
    <location>
        <begin position="57"/>
        <end position="79"/>
    </location>
</feature>
<feature type="zinc finger region" description="C2H2-type 2" evidence="1">
    <location>
        <begin position="85"/>
        <end position="107"/>
    </location>
</feature>
<feature type="zinc finger region" description="C2H2-type 3" evidence="1">
    <location>
        <begin position="113"/>
        <end position="135"/>
    </location>
</feature>
<feature type="zinc finger region" description="C2H2-type 4" evidence="1">
    <location>
        <begin position="141"/>
        <end position="163"/>
    </location>
</feature>
<feature type="zinc finger region" description="C2H2-type 5" evidence="1">
    <location>
        <begin position="171"/>
        <end position="193"/>
    </location>
</feature>
<feature type="zinc finger region" description="C2H2-type 6" evidence="1">
    <location>
        <begin position="207"/>
        <end position="230"/>
    </location>
</feature>
<feature type="region of interest" description="Disordered" evidence="2">
    <location>
        <begin position="1"/>
        <end position="62"/>
    </location>
</feature>
<feature type="compositionally biased region" description="Basic and acidic residues" evidence="2">
    <location>
        <begin position="22"/>
        <end position="31"/>
    </location>
</feature>
<feature type="compositionally biased region" description="Basic residues" evidence="2">
    <location>
        <begin position="46"/>
        <end position="57"/>
    </location>
</feature>
<dbReference type="EMBL" id="AK159025">
    <property type="protein sequence ID" value="BAE34773.1"/>
    <property type="molecule type" value="mRNA"/>
</dbReference>
<dbReference type="CCDS" id="CCDS20956.1"/>
<dbReference type="RefSeq" id="NP_001028377.1">
    <property type="nucleotide sequence ID" value="NM_001033205.3"/>
</dbReference>
<dbReference type="RefSeq" id="XP_006539509.1">
    <property type="nucleotide sequence ID" value="XM_006539446.3"/>
</dbReference>
<dbReference type="SMR" id="Q3TXZ1"/>
<dbReference type="FunCoup" id="Q3TXZ1">
    <property type="interactions" value="29"/>
</dbReference>
<dbReference type="STRING" id="10090.ENSMUSP00000092294"/>
<dbReference type="iPTMnet" id="Q3TXZ1"/>
<dbReference type="PhosphoSitePlus" id="Q3TXZ1"/>
<dbReference type="jPOST" id="Q3TXZ1"/>
<dbReference type="PaxDb" id="10090-ENSMUSP00000092294"/>
<dbReference type="ProteomicsDB" id="302090"/>
<dbReference type="Antibodypedia" id="17608">
    <property type="antibodies" value="130 antibodies from 23 providers"/>
</dbReference>
<dbReference type="Ensembl" id="ENSMUST00000094705.3">
    <property type="protein sequence ID" value="ENSMUSP00000092294.3"/>
    <property type="gene ID" value="ENSMUSG00000066721.4"/>
</dbReference>
<dbReference type="GeneID" id="101544"/>
<dbReference type="KEGG" id="mmu:101544"/>
<dbReference type="UCSC" id="uc009fqa.1">
    <property type="organism name" value="mouse"/>
</dbReference>
<dbReference type="AGR" id="MGI:2141921"/>
<dbReference type="CTD" id="101544"/>
<dbReference type="MGI" id="MGI:2141921">
    <property type="gene designation" value="Zfp575"/>
</dbReference>
<dbReference type="VEuPathDB" id="HostDB:ENSMUSG00000066721"/>
<dbReference type="eggNOG" id="KOG1721">
    <property type="taxonomic scope" value="Eukaryota"/>
</dbReference>
<dbReference type="GeneTree" id="ENSGT00940000162551"/>
<dbReference type="HOGENOM" id="CLU_069747_0_0_1"/>
<dbReference type="InParanoid" id="Q3TXZ1"/>
<dbReference type="OMA" id="AAHRWTH"/>
<dbReference type="OrthoDB" id="7331812at2759"/>
<dbReference type="PhylomeDB" id="Q3TXZ1"/>
<dbReference type="TreeFam" id="TF338022"/>
<dbReference type="BioGRID-ORCS" id="101544">
    <property type="hits" value="3 hits in 77 CRISPR screens"/>
</dbReference>
<dbReference type="PRO" id="PR:Q3TXZ1"/>
<dbReference type="Proteomes" id="UP000000589">
    <property type="component" value="Chromosome 7"/>
</dbReference>
<dbReference type="RNAct" id="Q3TXZ1">
    <property type="molecule type" value="protein"/>
</dbReference>
<dbReference type="Bgee" id="ENSMUSG00000066721">
    <property type="expression patterns" value="Expressed in embryonic brain and 47 other cell types or tissues"/>
</dbReference>
<dbReference type="ExpressionAtlas" id="Q3TXZ1">
    <property type="expression patterns" value="baseline and differential"/>
</dbReference>
<dbReference type="GO" id="GO:0005634">
    <property type="term" value="C:nucleus"/>
    <property type="evidence" value="ECO:0007669"/>
    <property type="project" value="UniProtKB-SubCell"/>
</dbReference>
<dbReference type="GO" id="GO:0003677">
    <property type="term" value="F:DNA binding"/>
    <property type="evidence" value="ECO:0007669"/>
    <property type="project" value="UniProtKB-KW"/>
</dbReference>
<dbReference type="GO" id="GO:0008270">
    <property type="term" value="F:zinc ion binding"/>
    <property type="evidence" value="ECO:0007669"/>
    <property type="project" value="UniProtKB-KW"/>
</dbReference>
<dbReference type="FunFam" id="3.30.160.60:FF:000100">
    <property type="entry name" value="Zinc finger 45-like"/>
    <property type="match status" value="1"/>
</dbReference>
<dbReference type="FunFam" id="3.30.160.60:FF:000565">
    <property type="entry name" value="Zinc finger protein 575"/>
    <property type="match status" value="3"/>
</dbReference>
<dbReference type="Gene3D" id="3.30.160.60">
    <property type="entry name" value="Classic Zinc Finger"/>
    <property type="match status" value="5"/>
</dbReference>
<dbReference type="InterPro" id="IPR036236">
    <property type="entry name" value="Znf_C2H2_sf"/>
</dbReference>
<dbReference type="InterPro" id="IPR013087">
    <property type="entry name" value="Znf_C2H2_type"/>
</dbReference>
<dbReference type="PANTHER" id="PTHR23226">
    <property type="entry name" value="ZINC FINGER AND SCAN DOMAIN-CONTAINING"/>
    <property type="match status" value="1"/>
</dbReference>
<dbReference type="PANTHER" id="PTHR23226:SF206">
    <property type="entry name" value="ZINC FINGER PROTEIN 575"/>
    <property type="match status" value="1"/>
</dbReference>
<dbReference type="Pfam" id="PF00096">
    <property type="entry name" value="zf-C2H2"/>
    <property type="match status" value="5"/>
</dbReference>
<dbReference type="SMART" id="SM00355">
    <property type="entry name" value="ZnF_C2H2"/>
    <property type="match status" value="6"/>
</dbReference>
<dbReference type="SUPFAM" id="SSF57667">
    <property type="entry name" value="beta-beta-alpha zinc fingers"/>
    <property type="match status" value="3"/>
</dbReference>
<dbReference type="PROSITE" id="PS00028">
    <property type="entry name" value="ZINC_FINGER_C2H2_1"/>
    <property type="match status" value="6"/>
</dbReference>
<dbReference type="PROSITE" id="PS50157">
    <property type="entry name" value="ZINC_FINGER_C2H2_2"/>
    <property type="match status" value="6"/>
</dbReference>
<comment type="function">
    <text>May be involved in transcriptional regulation.</text>
</comment>
<comment type="subcellular location">
    <subcellularLocation>
        <location evidence="3">Nucleus</location>
    </subcellularLocation>
</comment>
<comment type="similarity">
    <text evidence="3">Belongs to the krueppel C2H2-type zinc-finger protein family.</text>
</comment>
<proteinExistence type="evidence at transcript level"/>
<organism>
    <name type="scientific">Mus musculus</name>
    <name type="common">Mouse</name>
    <dbReference type="NCBI Taxonomy" id="10090"/>
    <lineage>
        <taxon>Eukaryota</taxon>
        <taxon>Metazoa</taxon>
        <taxon>Chordata</taxon>
        <taxon>Craniata</taxon>
        <taxon>Vertebrata</taxon>
        <taxon>Euteleostomi</taxon>
        <taxon>Mammalia</taxon>
        <taxon>Eutheria</taxon>
        <taxon>Euarchontoglires</taxon>
        <taxon>Glires</taxon>
        <taxon>Rodentia</taxon>
        <taxon>Myomorpha</taxon>
        <taxon>Muroidea</taxon>
        <taxon>Muridae</taxon>
        <taxon>Murinae</taxon>
        <taxon>Mus</taxon>
        <taxon>Mus</taxon>
    </lineage>
</organism>
<protein>
    <recommendedName>
        <fullName>Zinc finger protein 575</fullName>
    </recommendedName>
</protein>
<sequence>MLGGSVKSEVRASEPSPTCQDPETKAPHQDLPRPNQPAASGSVPSRPRRRPPPQRPHRCPDCPKAFSYPSKLATHRLAHGGTRPHPCPDCPKAFSYPSKLAAHRLTHSGARPHSCPHCPKAFGHRSKLAAHLWTHAPARPYPCPDCPKSFCYPSKLAAHRHTHHATDARPYPCPHCPKAFSFPSKLAAHRLCHDPPTAPSSQATGSHRCSSCNQAFGQRRLLLVHQRSHHQSEGQGERE</sequence>